<organism>
    <name type="scientific">Ovis aries</name>
    <name type="common">Sheep</name>
    <dbReference type="NCBI Taxonomy" id="9940"/>
    <lineage>
        <taxon>Eukaryota</taxon>
        <taxon>Metazoa</taxon>
        <taxon>Chordata</taxon>
        <taxon>Craniata</taxon>
        <taxon>Vertebrata</taxon>
        <taxon>Euteleostomi</taxon>
        <taxon>Mammalia</taxon>
        <taxon>Eutheria</taxon>
        <taxon>Laurasiatheria</taxon>
        <taxon>Artiodactyla</taxon>
        <taxon>Ruminantia</taxon>
        <taxon>Pecora</taxon>
        <taxon>Bovidae</taxon>
        <taxon>Caprinae</taxon>
        <taxon>Ovis</taxon>
    </lineage>
</organism>
<name>G3P_SHEEP</name>
<keyword id="KW-0007">Acetylation</keyword>
<keyword id="KW-0013">ADP-ribosylation</keyword>
<keyword id="KW-0053">Apoptosis</keyword>
<keyword id="KW-0963">Cytoplasm</keyword>
<keyword id="KW-0206">Cytoskeleton</keyword>
<keyword id="KW-0324">Glycolysis</keyword>
<keyword id="KW-0391">Immunity</keyword>
<keyword id="KW-0399">Innate immunity</keyword>
<keyword id="KW-1017">Isopeptide bond</keyword>
<keyword id="KW-0488">Methylation</keyword>
<keyword id="KW-0520">NAD</keyword>
<keyword id="KW-0539">Nucleus</keyword>
<keyword id="KW-0560">Oxidoreductase</keyword>
<keyword id="KW-0597">Phosphoprotein</keyword>
<keyword id="KW-1185">Reference proteome</keyword>
<keyword id="KW-0702">S-nitrosylation</keyword>
<keyword id="KW-0808">Transferase</keyword>
<keyword id="KW-0810">Translation regulation</keyword>
<keyword id="KW-0832">Ubl conjugation</keyword>
<accession>Q28554</accession>
<accession>O02701</accession>
<accession>O02760</accession>
<accession>O18908</accession>
<accession>O46400</accession>
<reference key="1">
    <citation type="submission" date="1997-11" db="EMBL/GenBank/DDBJ databases">
        <authorList>
            <person name="Tai T.C."/>
            <person name="Lye S.J."/>
            <person name="Adamson S.L."/>
        </authorList>
    </citation>
    <scope>NUCLEOTIDE SEQUENCE [MRNA] OF 1-205</scope>
    <source>
        <strain>Suffolk Dorset</strain>
        <tissue>Brain</tissue>
    </source>
</reference>
<reference key="2">
    <citation type="journal article" date="1997" name="J. Soc. Gynecol. Invest.">
        <title>Pregnancy induces an increase in the expression of glyceraldehyde-3-phosphate dehydrogenase in uterine artery endothelial cells.</title>
        <authorList>
            <person name="Cale J.M."/>
            <person name="Millican D.S."/>
            <person name="Itoh H."/>
            <person name="Magness R.R."/>
            <person name="Bird I.M."/>
        </authorList>
    </citation>
    <scope>NUCLEOTIDE SEQUENCE [MRNA] OF 34-311</scope>
    <source>
        <tissue>Adrenal cortex</tissue>
    </source>
</reference>
<reference key="3">
    <citation type="submission" date="1997-03" db="EMBL/GenBank/DDBJ databases">
        <authorList>
            <person name="Ing N.H."/>
            <person name="Bhattacharyya S."/>
        </authorList>
    </citation>
    <scope>NUCLEOTIDE SEQUENCE [MRNA] OF 62-127</scope>
</reference>
<reference key="4">
    <citation type="submission" date="1997-10" db="EMBL/GenBank/DDBJ databases">
        <title>Ovine glyceraldehyde-3-phosphate dehydrogenase (GAPDH) sequence.</title>
        <authorList>
            <person name="Nixon A.J."/>
            <person name="Wildermoth J.E."/>
            <person name="Ford C.A."/>
            <person name="Pearson A.J."/>
        </authorList>
    </citation>
    <scope>NUCLEOTIDE SEQUENCE [MRNA] OF 109-230</scope>
    <source>
        <strain>New Zealand Wiltshire</strain>
        <tissue>Skin</tissue>
    </source>
</reference>
<reference key="5">
    <citation type="submission" date="1997-04" db="EMBL/GenBank/DDBJ databases">
        <authorList>
            <person name="Lee G.H.Y."/>
            <person name="Thonney M.L."/>
        </authorList>
    </citation>
    <scope>NUCLEOTIDE SEQUENCE [MRNA] OF 139-322</scope>
</reference>
<reference key="6">
    <citation type="submission" date="1995-11" db="EMBL/GenBank/DDBJ databases">
        <authorList>
            <person name="Leroux C."/>
        </authorList>
    </citation>
    <scope>NUCLEOTIDE SEQUENCE [MRNA] OF 205-318</scope>
</reference>
<comment type="function">
    <text evidence="1 2">Has both glyceraldehyde-3-phosphate dehydrogenase and nitrosylase activities, thereby playing a role in glycolysis and nuclear functions, respectively. Glyceraldehyde-3-phosphate dehydrogenase is a key enzyme in glycolysis that catalyzes the first step of the pathway by converting D-glyceraldehyde 3-phosphate (G3P) into 3-phospho-D-glyceroyl phosphate (By similarity). Modulates the organization and assembly of the cytoskeleton. Facilitates the CHP1-dependent microtubule and membrane associations through its ability to stimulate the binding of CHP1 to microtubules (By similarity). Component of the GAIT (gamma interferon-activated inhibitor of translation) complex which mediates interferon-gamma-induced transcript-selective translation inhibition in inflammation processes. Upon interferon-gamma treatment assembles into the GAIT complex which binds to stem loop-containing GAIT elements in the 3'-UTR of diverse inflammatory mRNAs (such as ceruplasmin) and suppresses their translation. Also plays a role in innate immunity by promoting TNF-induced NF-kappa-B activation and type I interferon production, via interaction with TRAF2 and TRAF3, respectively (By similarity). Participates in nuclear events including transcription, RNA transport, DNA replication and apoptosis. Nuclear functions are probably due to the nitrosylase activity that mediates cysteine S-nitrosylation of nuclear target proteins such as SIRT1, HDAC2 and PRKDC (By similarity).</text>
</comment>
<comment type="catalytic activity">
    <reaction evidence="1 6">
        <text>D-glyceraldehyde 3-phosphate + phosphate + NAD(+) = (2R)-3-phospho-glyceroyl phosphate + NADH + H(+)</text>
        <dbReference type="Rhea" id="RHEA:10300"/>
        <dbReference type="ChEBI" id="CHEBI:15378"/>
        <dbReference type="ChEBI" id="CHEBI:43474"/>
        <dbReference type="ChEBI" id="CHEBI:57540"/>
        <dbReference type="ChEBI" id="CHEBI:57604"/>
        <dbReference type="ChEBI" id="CHEBI:57945"/>
        <dbReference type="ChEBI" id="CHEBI:59776"/>
        <dbReference type="EC" id="1.2.1.12"/>
    </reaction>
</comment>
<comment type="catalytic activity">
    <reaction evidence="2">
        <text>S-nitroso-L-cysteinyl-[GAPDH] + L-cysteinyl-[protein] = L-cysteinyl-[GAPDH] + S-nitroso-L-cysteinyl-[protein]</text>
        <dbReference type="Rhea" id="RHEA:66684"/>
        <dbReference type="Rhea" id="RHEA-COMP:10131"/>
        <dbReference type="Rhea" id="RHEA-COMP:17089"/>
        <dbReference type="Rhea" id="RHEA-COMP:17090"/>
        <dbReference type="Rhea" id="RHEA-COMP:17091"/>
        <dbReference type="ChEBI" id="CHEBI:29950"/>
        <dbReference type="ChEBI" id="CHEBI:149494"/>
    </reaction>
    <physiologicalReaction direction="left-to-right" evidence="2">
        <dbReference type="Rhea" id="RHEA:66685"/>
    </physiologicalReaction>
</comment>
<comment type="activity regulation">
    <text evidence="2">Glyceraldehyde-3-phosphate dehydrogenase activity is inhibited by fumarate, via the formation of S-(2-succinyl)cysteine residues.</text>
</comment>
<comment type="pathway">
    <text>Carbohydrate degradation; glycolysis; pyruvate from D-glyceraldehyde 3-phosphate: step 1/5.</text>
</comment>
<comment type="subunit">
    <text evidence="1 2 3">Homotetramer (By similarity). Interacts with TPPP; the interaction is direct (By similarity). Interacts (when S-nitrosylated) with SIAH1; leading to nuclear translocation. Interacts with RILPL1/GOSPEL, leading to prevent the interaction between GAPDH and SIAH1 and prevent nuclear translocation. Interacts with CHP1; the interaction increases the binding of CHP1 with microtubules. Associates with microtubules (By similarity). Interacts with EIF1AD, USP25, PRKCI and WARS1. Interacts with phosphorylated RPL13A; inhibited by oxidatively-modified low-densitity lipoprotein (LDL(ox)). Component of the GAIT complex. Interacts with FKBP6; leading to inhibit GAPDH catalytic activity. Interacts with TRAF2, promoting TRAF2 ubiquitination. Interacts with TRAF3, promoting TRAF3 ubiquitination (By similarity).</text>
</comment>
<comment type="subcellular location">
    <subcellularLocation>
        <location evidence="2">Cytoplasm</location>
        <location evidence="2">Cytosol</location>
    </subcellularLocation>
    <subcellularLocation>
        <location evidence="2">Cytoplasm</location>
        <location evidence="2">Cytoskeleton</location>
    </subcellularLocation>
    <subcellularLocation>
        <location evidence="2">Nucleus</location>
    </subcellularLocation>
    <text evidence="2">Translocates to the nucleus following S-nitrosylation and interaction with SIAH1, which contains a nuclear localization signal. Colocalizes with CHP1 to small punctate structures along the microtubules tracks.</text>
</comment>
<comment type="domain">
    <text evidence="1">The [IL]-x-C-x-x-[DE] motif is a proposed target motif for cysteine S-nitrosylation mediated by the iNOS-S100A8/A9 transnitrosylase complex.</text>
</comment>
<comment type="PTM">
    <text evidence="1">ISGylated.</text>
</comment>
<comment type="PTM">
    <text evidence="1 2">S-nitrosylation of Cys-139 leads to interaction with SIAH1, followed by translocation to the nucleus S-nitrosylation of Cys-234 is induced by interferon-gamma and LDL(ox) implicating the iNOS-S100A8/9 transnitrosylase complex and seems to prevent interaction with phosphorylated RPL13A and to interfere with GAIT complex activity (By similarity).</text>
</comment>
<comment type="PTM">
    <text evidence="4">Sulfhydration at Cys-139 increases catalytic activity.</text>
</comment>
<comment type="PTM">
    <text evidence="1">Oxidative stress can promote the formation of high molecular weight disulfide-linked GAPDH aggregates, through a process called nucleocytoplasmic coagulation.</text>
</comment>
<comment type="similarity">
    <text evidence="7">Belongs to the glyceraldehyde-3-phosphate dehydrogenase family.</text>
</comment>
<sequence>IGRLVTRAAFNTGKVDIVAINDPFIDLHYMVYMFQYDSTHGKFHGTVKAENGKLVINGKAITIFQERDPANIKWGDAGAEYVVESTGVFTTMEKAGAHLKGGAKKVIISAPSADAPMFVMGVNHEKYNNTLKIVSNASCTTNCLAPLAKVIHDHFGIVEGLMTTVHAITATQKTVDGPSGKLWRDGRGAAQNIIPASTGAAKAVGKVIPELNGKLTGMAFRVPTPNVSVVDLTCRLEKPAKYDEIKKVVKQASEGPLKGILGYTEDQVVSCDFNSDTHSSTFDAGAGIALNDHFVKLISWYDNEFGYSNRVVDLMVHMASKE</sequence>
<feature type="chain" id="PRO_0000145495" description="Glyceraldehyde-3-phosphate dehydrogenase">
    <location>
        <begin position="1" status="less than"/>
        <end position="322"/>
    </location>
</feature>
<feature type="short sequence motif" description="[IL]-x-C-x-x-[DE] motif" evidence="1">
    <location>
        <begin position="232"/>
        <end position="237"/>
    </location>
</feature>
<feature type="active site" description="Nucleophile" evidence="6">
    <location>
        <position position="139"/>
    </location>
</feature>
<feature type="binding site" evidence="1">
    <location>
        <position position="22"/>
    </location>
    <ligand>
        <name>NAD(+)</name>
        <dbReference type="ChEBI" id="CHEBI:57540"/>
    </ligand>
</feature>
<feature type="binding site" evidence="1">
    <location>
        <position position="67"/>
    </location>
    <ligand>
        <name>NAD(+)</name>
        <dbReference type="ChEBI" id="CHEBI:57540"/>
    </ligand>
</feature>
<feature type="binding site" evidence="1">
    <location>
        <position position="109"/>
    </location>
    <ligand>
        <name>NAD(+)</name>
        <dbReference type="ChEBI" id="CHEBI:57540"/>
    </ligand>
</feature>
<feature type="binding site" evidence="5">
    <location>
        <begin position="138"/>
        <end position="140"/>
    </location>
    <ligand>
        <name>D-glyceraldehyde 3-phosphate</name>
        <dbReference type="ChEBI" id="CHEBI:59776"/>
    </ligand>
</feature>
<feature type="binding site" evidence="5">
    <location>
        <position position="169"/>
    </location>
    <ligand>
        <name>D-glyceraldehyde 3-phosphate</name>
        <dbReference type="ChEBI" id="CHEBI:59776"/>
    </ligand>
</feature>
<feature type="binding site" evidence="5">
    <location>
        <begin position="198"/>
        <end position="199"/>
    </location>
    <ligand>
        <name>D-glyceraldehyde 3-phosphate</name>
        <dbReference type="ChEBI" id="CHEBI:59776"/>
    </ligand>
</feature>
<feature type="binding site" evidence="5">
    <location>
        <position position="221"/>
    </location>
    <ligand>
        <name>D-glyceraldehyde 3-phosphate</name>
        <dbReference type="ChEBI" id="CHEBI:59776"/>
    </ligand>
</feature>
<feature type="binding site" evidence="1">
    <location>
        <position position="303"/>
    </location>
    <ligand>
        <name>NAD(+)</name>
        <dbReference type="ChEBI" id="CHEBI:57540"/>
    </ligand>
</feature>
<feature type="site" description="Activates thiol group during catalysis" evidence="1">
    <location>
        <position position="166"/>
    </location>
</feature>
<feature type="modified residue" description="Phosphotyrosine" evidence="1">
    <location>
        <position position="29"/>
    </location>
</feature>
<feature type="modified residue" description="N6-acetyllysine" evidence="1">
    <location>
        <position position="48"/>
    </location>
</feature>
<feature type="modified residue" description="Deamidated asparagine" evidence="1">
    <location>
        <position position="51"/>
    </location>
</feature>
<feature type="modified residue" description="N6,N6-dimethyllysine" evidence="1">
    <location>
        <position position="53"/>
    </location>
</feature>
<feature type="modified residue" description="Deamidated asparagine" evidence="1">
    <location>
        <position position="57"/>
    </location>
</feature>
<feature type="modified residue" description="Phosphothreonine" evidence="1">
    <location>
        <position position="62"/>
    </location>
</feature>
<feature type="modified residue" description="Phosphoserine" evidence="1">
    <location>
        <position position="109"/>
    </location>
</feature>
<feature type="modified residue" description="Phosphoserine" evidence="1">
    <location>
        <position position="135"/>
    </location>
</feature>
<feature type="modified residue" description="Deamidated asparagine" evidence="1">
    <location>
        <position position="136"/>
    </location>
</feature>
<feature type="modified residue" description="Phosphoserine" evidence="1">
    <location>
        <position position="138"/>
    </location>
</feature>
<feature type="modified residue" description="ADP-ribosylcysteine; by autocatalysis; in irreversibly inhibited form" evidence="2">
    <location>
        <position position="139"/>
    </location>
</feature>
<feature type="modified residue" description="Cysteine persulfide" evidence="4">
    <location>
        <position position="139"/>
    </location>
</feature>
<feature type="modified residue" description="S-(2-succinyl)cysteine" evidence="2">
    <location>
        <position position="139"/>
    </location>
</feature>
<feature type="modified residue" description="S-nitrosocysteine; in reversibly inhibited form" evidence="2">
    <location>
        <position position="139"/>
    </location>
</feature>
<feature type="modified residue" description="Phosphothreonine" evidence="1">
    <location>
        <position position="140"/>
    </location>
</feature>
<feature type="modified residue" description="Deamidated asparagine" evidence="1">
    <location>
        <position position="142"/>
    </location>
</feature>
<feature type="modified residue" description="Phosphothreonine" evidence="1">
    <location>
        <position position="164"/>
    </location>
</feature>
<feature type="modified residue" description="Phosphothreonine" evidence="1">
    <location>
        <position position="169"/>
    </location>
</feature>
<feature type="modified residue" description="Phosphothreonine" evidence="1">
    <location>
        <position position="171"/>
    </location>
</feature>
<feature type="modified residue" description="N6,N6-dimethyllysine; alternate" evidence="1">
    <location>
        <position position="181"/>
    </location>
</feature>
<feature type="modified residue" description="N6-acetyllysine; alternate" evidence="1">
    <location>
        <position position="181"/>
    </location>
</feature>
<feature type="modified residue" description="N6-malonyllysine; alternate" evidence="1">
    <location>
        <position position="181"/>
    </location>
</feature>
<feature type="modified residue" description="Phosphothreonine" evidence="1">
    <location>
        <position position="198"/>
    </location>
</feature>
<feature type="modified residue" description="N6,N6-dimethyllysine; alternate" evidence="1">
    <location>
        <position position="202"/>
    </location>
</feature>
<feature type="modified residue" description="N6-malonyllysine; alternate" evidence="1">
    <location>
        <position position="202"/>
    </location>
</feature>
<feature type="modified residue" description="N6-acetyllysine" evidence="1">
    <location>
        <position position="206"/>
    </location>
</feature>
<feature type="modified residue" description="Deamidated asparagine" evidence="1">
    <location>
        <position position="212"/>
    </location>
</feature>
<feature type="modified residue" description="N6,N6-dimethyllysine; alternate" evidence="1">
    <location>
        <position position="214"/>
    </location>
</feature>
<feature type="modified residue" description="N6-acetyllysine; alternate" evidence="1">
    <location>
        <position position="214"/>
    </location>
</feature>
<feature type="modified residue" description="Phosphothreonine" evidence="1">
    <location>
        <position position="216"/>
    </location>
</feature>
<feature type="modified residue" description="Phosphothreonine" evidence="1">
    <location>
        <position position="224"/>
    </location>
</feature>
<feature type="modified residue" description="Phosphoserine" evidence="1">
    <location>
        <position position="228"/>
    </location>
</feature>
<feature type="modified residue" description="S-(2-succinyl)cysteine" evidence="2">
    <location>
        <position position="234"/>
    </location>
</feature>
<feature type="modified residue" description="S-nitrosocysteine" evidence="1">
    <location>
        <position position="234"/>
    </location>
</feature>
<feature type="modified residue" description="N6-acetyllysine" evidence="1">
    <location>
        <position position="241"/>
    </location>
</feature>
<feature type="modified residue" description="N6,N6-dimethyllysine" evidence="1">
    <location>
        <position position="247"/>
    </location>
</feature>
<feature type="modified residue" description="N6,N6-dimethyllysine" evidence="1">
    <location>
        <position position="250"/>
    </location>
</feature>
<feature type="modified residue" description="Phosphoserine" evidence="1">
    <location>
        <position position="299"/>
    </location>
</feature>
<feature type="modified residue" description="Deamidated asparagine" evidence="1">
    <location>
        <position position="303"/>
    </location>
</feature>
<feature type="modified residue" description="Phosphoserine" evidence="1">
    <location>
        <position position="320"/>
    </location>
</feature>
<feature type="modified residue" description="N6,N6-dimethyllysine" evidence="1">
    <location>
        <position position="321"/>
    </location>
</feature>
<feature type="cross-link" description="Glycyl lysine isopeptide (Lys-Gly) (interchain with G-Cter in SUMO2)" evidence="1">
    <location>
        <position position="173"/>
    </location>
</feature>
<feature type="sequence conflict" description="In Ref. 3; AAB57838." evidence="7" ref="3">
    <original>KV</original>
    <variation>II</variation>
    <location>
        <begin position="105"/>
        <end position="106"/>
    </location>
</feature>
<feature type="sequence conflict" description="In Ref. 2; AAB86435." evidence="7" ref="2">
    <original>K</original>
    <variation>R</variation>
    <location>
        <position position="105"/>
    </location>
</feature>
<feature type="sequence conflict" description="In Ref. 3; AAB57838." evidence="7" ref="3">
    <original>A</original>
    <variation>L</variation>
    <location>
        <position position="113"/>
    </location>
</feature>
<feature type="sequence conflict" description="In Ref. 1; AAB88484." evidence="7" ref="1">
    <original>PS</original>
    <variation>LP</variation>
    <location>
        <begin position="178"/>
        <end position="179"/>
    </location>
</feature>
<feature type="sequence conflict" description="In Ref. 6; AAA81516." evidence="7" ref="6">
    <original>V</original>
    <variation>A</variation>
    <location>
        <position position="316"/>
    </location>
</feature>
<feature type="non-terminal residue">
    <location>
        <position position="1"/>
    </location>
</feature>
<evidence type="ECO:0000250" key="1">
    <source>
        <dbReference type="UniProtKB" id="P04406"/>
    </source>
</evidence>
<evidence type="ECO:0000250" key="2">
    <source>
        <dbReference type="UniProtKB" id="P04797"/>
    </source>
</evidence>
<evidence type="ECO:0000250" key="3">
    <source>
        <dbReference type="UniProtKB" id="P10096"/>
    </source>
</evidence>
<evidence type="ECO:0000250" key="4">
    <source>
        <dbReference type="UniProtKB" id="P16858"/>
    </source>
</evidence>
<evidence type="ECO:0000250" key="5">
    <source>
        <dbReference type="UniProtKB" id="P22513"/>
    </source>
</evidence>
<evidence type="ECO:0000255" key="6">
    <source>
        <dbReference type="PROSITE-ProRule" id="PRU10009"/>
    </source>
</evidence>
<evidence type="ECO:0000305" key="7"/>
<protein>
    <recommendedName>
        <fullName>Glyceraldehyde-3-phosphate dehydrogenase</fullName>
        <shortName>GAPDH</shortName>
        <ecNumber evidence="1">1.2.1.12</ecNumber>
    </recommendedName>
    <alternativeName>
        <fullName evidence="7">Peptidyl-cysteine S-nitrosylase GAPDH</fullName>
        <ecNumber evidence="2">2.6.99.-</ecNumber>
    </alternativeName>
</protein>
<proteinExistence type="evidence at transcript level"/>
<gene>
    <name type="primary">GAPDH</name>
    <name type="synonym">G3PDH</name>
    <name type="synonym">GAPD</name>
</gene>
<dbReference type="EC" id="1.2.1.12" evidence="1"/>
<dbReference type="EC" id="2.6.99.-" evidence="2"/>
<dbReference type="EMBL" id="AF035421">
    <property type="protein sequence ID" value="AAB88484.1"/>
    <property type="molecule type" value="mRNA"/>
</dbReference>
<dbReference type="EMBL" id="AF030943">
    <property type="protein sequence ID" value="AAB86435.1"/>
    <property type="molecule type" value="mRNA"/>
</dbReference>
<dbReference type="EMBL" id="U94718">
    <property type="protein sequence ID" value="AAB57838.1"/>
    <property type="molecule type" value="mRNA"/>
</dbReference>
<dbReference type="EMBL" id="AF022183">
    <property type="protein sequence ID" value="AAB71712.1"/>
    <property type="molecule type" value="mRNA"/>
</dbReference>
<dbReference type="EMBL" id="U94889">
    <property type="protein sequence ID" value="AAC16069.1"/>
    <property type="molecule type" value="mRNA"/>
</dbReference>
<dbReference type="EMBL" id="U39091">
    <property type="protein sequence ID" value="AAA81516.1"/>
    <property type="molecule type" value="mRNA"/>
</dbReference>
<dbReference type="SMR" id="Q28554"/>
<dbReference type="STRING" id="9940.ENSOARP00000008476"/>
<dbReference type="Allergome" id="12130">
    <property type="allergen name" value="Ovi a GAPDH"/>
</dbReference>
<dbReference type="PaxDb" id="9940-ENSOARP00000008476"/>
<dbReference type="eggNOG" id="KOG0657">
    <property type="taxonomic scope" value="Eukaryota"/>
</dbReference>
<dbReference type="UniPathway" id="UPA00109">
    <property type="reaction ID" value="UER00184"/>
</dbReference>
<dbReference type="Proteomes" id="UP000002356">
    <property type="component" value="Unplaced"/>
</dbReference>
<dbReference type="GO" id="GO:0005737">
    <property type="term" value="C:cytoplasm"/>
    <property type="evidence" value="ECO:0000250"/>
    <property type="project" value="UniProtKB"/>
</dbReference>
<dbReference type="GO" id="GO:0005829">
    <property type="term" value="C:cytosol"/>
    <property type="evidence" value="ECO:0000250"/>
    <property type="project" value="UniProtKB"/>
</dbReference>
<dbReference type="GO" id="GO:0097452">
    <property type="term" value="C:GAIT complex"/>
    <property type="evidence" value="ECO:0000250"/>
    <property type="project" value="UniProtKB"/>
</dbReference>
<dbReference type="GO" id="GO:0015630">
    <property type="term" value="C:microtubule cytoskeleton"/>
    <property type="evidence" value="ECO:0000250"/>
    <property type="project" value="UniProtKB"/>
</dbReference>
<dbReference type="GO" id="GO:0005634">
    <property type="term" value="C:nucleus"/>
    <property type="evidence" value="ECO:0000250"/>
    <property type="project" value="UniProtKB"/>
</dbReference>
<dbReference type="GO" id="GO:0004365">
    <property type="term" value="F:glyceraldehyde-3-phosphate dehydrogenase (NAD+) (phosphorylating) activity"/>
    <property type="evidence" value="ECO:0000250"/>
    <property type="project" value="UniProtKB"/>
</dbReference>
<dbReference type="GO" id="GO:0008017">
    <property type="term" value="F:microtubule binding"/>
    <property type="evidence" value="ECO:0000250"/>
    <property type="project" value="UniProtKB"/>
</dbReference>
<dbReference type="GO" id="GO:0051287">
    <property type="term" value="F:NAD binding"/>
    <property type="evidence" value="ECO:0007669"/>
    <property type="project" value="InterPro"/>
</dbReference>
<dbReference type="GO" id="GO:0050661">
    <property type="term" value="F:NADP binding"/>
    <property type="evidence" value="ECO:0007669"/>
    <property type="project" value="InterPro"/>
</dbReference>
<dbReference type="GO" id="GO:0035605">
    <property type="term" value="F:peptidyl-cysteine S-nitrosylase activity"/>
    <property type="evidence" value="ECO:0000250"/>
    <property type="project" value="UniProtKB"/>
</dbReference>
<dbReference type="GO" id="GO:0006006">
    <property type="term" value="P:glucose metabolic process"/>
    <property type="evidence" value="ECO:0007669"/>
    <property type="project" value="InterPro"/>
</dbReference>
<dbReference type="GO" id="GO:0006096">
    <property type="term" value="P:glycolytic process"/>
    <property type="evidence" value="ECO:0007669"/>
    <property type="project" value="UniProtKB-UniPathway"/>
</dbReference>
<dbReference type="GO" id="GO:0045087">
    <property type="term" value="P:innate immune response"/>
    <property type="evidence" value="ECO:0007669"/>
    <property type="project" value="UniProtKB-KW"/>
</dbReference>
<dbReference type="GO" id="GO:0000226">
    <property type="term" value="P:microtubule cytoskeleton organization"/>
    <property type="evidence" value="ECO:0000250"/>
    <property type="project" value="UniProtKB"/>
</dbReference>
<dbReference type="GO" id="GO:0051402">
    <property type="term" value="P:neuron apoptotic process"/>
    <property type="evidence" value="ECO:0000250"/>
    <property type="project" value="UniProtKB"/>
</dbReference>
<dbReference type="GO" id="GO:0035606">
    <property type="term" value="P:peptidyl-cysteine S-trans-nitrosylation"/>
    <property type="evidence" value="ECO:0000250"/>
    <property type="project" value="UniProtKB"/>
</dbReference>
<dbReference type="GO" id="GO:0043123">
    <property type="term" value="P:positive regulation of canonical NF-kappaB signal transduction"/>
    <property type="evidence" value="ECO:0000250"/>
    <property type="project" value="UniProtKB"/>
</dbReference>
<dbReference type="GO" id="GO:0032481">
    <property type="term" value="P:positive regulation of type I interferon production"/>
    <property type="evidence" value="ECO:0000250"/>
    <property type="project" value="UniProtKB"/>
</dbReference>
<dbReference type="GO" id="GO:0050821">
    <property type="term" value="P:protein stabilization"/>
    <property type="evidence" value="ECO:0000250"/>
    <property type="project" value="UniProtKB"/>
</dbReference>
<dbReference type="GO" id="GO:0006417">
    <property type="term" value="P:regulation of translation"/>
    <property type="evidence" value="ECO:0007669"/>
    <property type="project" value="UniProtKB-KW"/>
</dbReference>
<dbReference type="CDD" id="cd18126">
    <property type="entry name" value="GAPDH_I_C"/>
    <property type="match status" value="1"/>
</dbReference>
<dbReference type="CDD" id="cd05214">
    <property type="entry name" value="GAPDH_I_N"/>
    <property type="match status" value="1"/>
</dbReference>
<dbReference type="FunFam" id="3.30.360.10:FF:000001">
    <property type="entry name" value="Glyceraldehyde-3-phosphate dehydrogenase"/>
    <property type="match status" value="1"/>
</dbReference>
<dbReference type="FunFam" id="3.40.50.720:FF:001161">
    <property type="entry name" value="Glyceraldehyde-3-phosphate dehydrogenase"/>
    <property type="match status" value="1"/>
</dbReference>
<dbReference type="Gene3D" id="3.30.360.10">
    <property type="entry name" value="Dihydrodipicolinate Reductase, domain 2"/>
    <property type="match status" value="1"/>
</dbReference>
<dbReference type="Gene3D" id="3.40.50.720">
    <property type="entry name" value="NAD(P)-binding Rossmann-like Domain"/>
    <property type="match status" value="1"/>
</dbReference>
<dbReference type="InterPro" id="IPR020831">
    <property type="entry name" value="GlycerAld/Erythrose_P_DH"/>
</dbReference>
<dbReference type="InterPro" id="IPR020830">
    <property type="entry name" value="GlycerAld_3-P_DH_AS"/>
</dbReference>
<dbReference type="InterPro" id="IPR020829">
    <property type="entry name" value="GlycerAld_3-P_DH_cat"/>
</dbReference>
<dbReference type="InterPro" id="IPR020828">
    <property type="entry name" value="GlycerAld_3-P_DH_NAD(P)-bd"/>
</dbReference>
<dbReference type="InterPro" id="IPR006424">
    <property type="entry name" value="Glyceraldehyde-3-P_DH_1"/>
</dbReference>
<dbReference type="InterPro" id="IPR036291">
    <property type="entry name" value="NAD(P)-bd_dom_sf"/>
</dbReference>
<dbReference type="NCBIfam" id="TIGR01534">
    <property type="entry name" value="GAPDH-I"/>
    <property type="match status" value="1"/>
</dbReference>
<dbReference type="PANTHER" id="PTHR10836">
    <property type="entry name" value="GLYCERALDEHYDE 3-PHOSPHATE DEHYDROGENASE"/>
    <property type="match status" value="1"/>
</dbReference>
<dbReference type="PANTHER" id="PTHR10836:SF111">
    <property type="entry name" value="GLYCERALDEHYDE-3-PHOSPHATE DEHYDROGENASE"/>
    <property type="match status" value="1"/>
</dbReference>
<dbReference type="Pfam" id="PF02800">
    <property type="entry name" value="Gp_dh_C"/>
    <property type="match status" value="1"/>
</dbReference>
<dbReference type="Pfam" id="PF00044">
    <property type="entry name" value="Gp_dh_N"/>
    <property type="match status" value="1"/>
</dbReference>
<dbReference type="PIRSF" id="PIRSF000149">
    <property type="entry name" value="GAP_DH"/>
    <property type="match status" value="1"/>
</dbReference>
<dbReference type="PRINTS" id="PR00078">
    <property type="entry name" value="G3PDHDRGNASE"/>
</dbReference>
<dbReference type="SMART" id="SM00846">
    <property type="entry name" value="Gp_dh_N"/>
    <property type="match status" value="1"/>
</dbReference>
<dbReference type="SUPFAM" id="SSF55347">
    <property type="entry name" value="Glyceraldehyde-3-phosphate dehydrogenase-like, C-terminal domain"/>
    <property type="match status" value="1"/>
</dbReference>
<dbReference type="SUPFAM" id="SSF51735">
    <property type="entry name" value="NAD(P)-binding Rossmann-fold domains"/>
    <property type="match status" value="1"/>
</dbReference>
<dbReference type="PROSITE" id="PS00071">
    <property type="entry name" value="GAPDH"/>
    <property type="match status" value="1"/>
</dbReference>